<dbReference type="EMBL" id="AM884176">
    <property type="protein sequence ID" value="CAP03716.1"/>
    <property type="molecule type" value="Genomic_DNA"/>
</dbReference>
<dbReference type="RefSeq" id="WP_009873500.1">
    <property type="nucleotide sequence ID" value="NC_010287.1"/>
</dbReference>
<dbReference type="RefSeq" id="YP_001654361.1">
    <property type="nucleotide sequence ID" value="NC_010287.1"/>
</dbReference>
<dbReference type="SMR" id="B0B9C9"/>
<dbReference type="KEGG" id="ctb:CTL0277"/>
<dbReference type="PATRIC" id="fig|471472.4.peg.301"/>
<dbReference type="HOGENOM" id="CLU_114306_2_0_0"/>
<dbReference type="Proteomes" id="UP001154402">
    <property type="component" value="Chromosome"/>
</dbReference>
<dbReference type="GO" id="GO:1990904">
    <property type="term" value="C:ribonucleoprotein complex"/>
    <property type="evidence" value="ECO:0007669"/>
    <property type="project" value="UniProtKB-KW"/>
</dbReference>
<dbReference type="GO" id="GO:0005840">
    <property type="term" value="C:ribosome"/>
    <property type="evidence" value="ECO:0007669"/>
    <property type="project" value="UniProtKB-KW"/>
</dbReference>
<dbReference type="GO" id="GO:0003735">
    <property type="term" value="F:structural constituent of ribosome"/>
    <property type="evidence" value="ECO:0007669"/>
    <property type="project" value="InterPro"/>
</dbReference>
<dbReference type="GO" id="GO:0006412">
    <property type="term" value="P:translation"/>
    <property type="evidence" value="ECO:0007669"/>
    <property type="project" value="UniProtKB-UniRule"/>
</dbReference>
<dbReference type="Gene3D" id="4.10.830.30">
    <property type="entry name" value="Ribosomal protein L31"/>
    <property type="match status" value="1"/>
</dbReference>
<dbReference type="HAMAP" id="MF_00502">
    <property type="entry name" value="Ribosomal_bL31_2"/>
    <property type="match status" value="1"/>
</dbReference>
<dbReference type="InterPro" id="IPR034704">
    <property type="entry name" value="Ribosomal_bL28/bL31-like_sf"/>
</dbReference>
<dbReference type="InterPro" id="IPR002150">
    <property type="entry name" value="Ribosomal_bL31"/>
</dbReference>
<dbReference type="InterPro" id="IPR027493">
    <property type="entry name" value="Ribosomal_bL31_B"/>
</dbReference>
<dbReference type="InterPro" id="IPR042105">
    <property type="entry name" value="Ribosomal_bL31_sf"/>
</dbReference>
<dbReference type="NCBIfam" id="TIGR00105">
    <property type="entry name" value="L31"/>
    <property type="match status" value="1"/>
</dbReference>
<dbReference type="NCBIfam" id="NF002462">
    <property type="entry name" value="PRK01678.1"/>
    <property type="match status" value="1"/>
</dbReference>
<dbReference type="PANTHER" id="PTHR33280">
    <property type="entry name" value="50S RIBOSOMAL PROTEIN L31, CHLOROPLASTIC"/>
    <property type="match status" value="1"/>
</dbReference>
<dbReference type="PANTHER" id="PTHR33280:SF1">
    <property type="entry name" value="LARGE RIBOSOMAL SUBUNIT PROTEIN BL31C"/>
    <property type="match status" value="1"/>
</dbReference>
<dbReference type="Pfam" id="PF01197">
    <property type="entry name" value="Ribosomal_L31"/>
    <property type="match status" value="1"/>
</dbReference>
<dbReference type="PRINTS" id="PR01249">
    <property type="entry name" value="RIBOSOMALL31"/>
</dbReference>
<dbReference type="SUPFAM" id="SSF143800">
    <property type="entry name" value="L28p-like"/>
    <property type="match status" value="1"/>
</dbReference>
<dbReference type="PROSITE" id="PS01143">
    <property type="entry name" value="RIBOSOMAL_L31"/>
    <property type="match status" value="1"/>
</dbReference>
<reference key="1">
    <citation type="journal article" date="2008" name="Genome Res.">
        <title>Chlamydia trachomatis: genome sequence analysis of lymphogranuloma venereum isolates.</title>
        <authorList>
            <person name="Thomson N.R."/>
            <person name="Holden M.T.G."/>
            <person name="Carder C."/>
            <person name="Lennard N."/>
            <person name="Lockey S.J."/>
            <person name="Marsh P."/>
            <person name="Skipp P."/>
            <person name="O'Connor C.D."/>
            <person name="Goodhead I."/>
            <person name="Norbertzcak H."/>
            <person name="Harris B."/>
            <person name="Ormond D."/>
            <person name="Rance R."/>
            <person name="Quail M.A."/>
            <person name="Parkhill J."/>
            <person name="Stephens R.S."/>
            <person name="Clarke I.N."/>
        </authorList>
    </citation>
    <scope>NUCLEOTIDE SEQUENCE [LARGE SCALE GENOMIC DNA]</scope>
    <source>
        <strain>ATCC VR-902B / DSM 19102 / 434/Bu</strain>
    </source>
</reference>
<accession>B0B9C9</accession>
<feature type="chain" id="PRO_1000126794" description="Large ribosomal subunit protein bL31B">
    <location>
        <begin position="1"/>
        <end position="108"/>
    </location>
</feature>
<feature type="region of interest" description="Disordered" evidence="2">
    <location>
        <begin position="86"/>
        <end position="108"/>
    </location>
</feature>
<feature type="compositionally biased region" description="Basic residues" evidence="2">
    <location>
        <begin position="97"/>
        <end position="108"/>
    </location>
</feature>
<protein>
    <recommendedName>
        <fullName evidence="1">Large ribosomal subunit protein bL31B</fullName>
    </recommendedName>
    <alternativeName>
        <fullName evidence="3">50S ribosomal protein L31 type B</fullName>
    </alternativeName>
</protein>
<keyword id="KW-0687">Ribonucleoprotein</keyword>
<keyword id="KW-0689">Ribosomal protein</keyword>
<comment type="subunit">
    <text evidence="1">Part of the 50S ribosomal subunit.</text>
</comment>
<comment type="similarity">
    <text evidence="1">Belongs to the bacterial ribosomal protein bL31 family. Type B subfamily.</text>
</comment>
<gene>
    <name evidence="1" type="primary">rpmE2</name>
    <name type="ordered locus">CTL0277</name>
</gene>
<evidence type="ECO:0000255" key="1">
    <source>
        <dbReference type="HAMAP-Rule" id="MF_00502"/>
    </source>
</evidence>
<evidence type="ECO:0000256" key="2">
    <source>
        <dbReference type="SAM" id="MobiDB-lite"/>
    </source>
</evidence>
<evidence type="ECO:0000305" key="3"/>
<sequence>MKKNTHPEYRQVLFVDSSTGYKFVCGSTYQTDKTEVFEGQEYPVCYVSISSSSHPFFTGSKKLVDAEGRVDKFLKRYSGIKQSAPKPETVVEDVLPKGKKKSPAKKKK</sequence>
<name>RL31B_CHLT2</name>
<proteinExistence type="inferred from homology"/>
<organism>
    <name type="scientific">Chlamydia trachomatis serovar L2 (strain ATCC VR-902B / DSM 19102 / 434/Bu)</name>
    <dbReference type="NCBI Taxonomy" id="471472"/>
    <lineage>
        <taxon>Bacteria</taxon>
        <taxon>Pseudomonadati</taxon>
        <taxon>Chlamydiota</taxon>
        <taxon>Chlamydiia</taxon>
        <taxon>Chlamydiales</taxon>
        <taxon>Chlamydiaceae</taxon>
        <taxon>Chlamydia/Chlamydophila group</taxon>
        <taxon>Chlamydia</taxon>
    </lineage>
</organism>